<keyword id="KW-0067">ATP-binding</keyword>
<keyword id="KW-0131">Cell cycle</keyword>
<keyword id="KW-0132">Cell division</keyword>
<keyword id="KW-0997">Cell inner membrane</keyword>
<keyword id="KW-1003">Cell membrane</keyword>
<keyword id="KW-0159">Chromosome partition</keyword>
<keyword id="KW-0238">DNA-binding</keyword>
<keyword id="KW-0472">Membrane</keyword>
<keyword id="KW-0547">Nucleotide-binding</keyword>
<keyword id="KW-0812">Transmembrane</keyword>
<keyword id="KW-1133">Transmembrane helix</keyword>
<accession>Q87QP4</accession>
<proteinExistence type="inferred from homology"/>
<organism>
    <name type="scientific">Vibrio parahaemolyticus serotype O3:K6 (strain RIMD 2210633)</name>
    <dbReference type="NCBI Taxonomy" id="223926"/>
    <lineage>
        <taxon>Bacteria</taxon>
        <taxon>Pseudomonadati</taxon>
        <taxon>Pseudomonadota</taxon>
        <taxon>Gammaproteobacteria</taxon>
        <taxon>Vibrionales</taxon>
        <taxon>Vibrionaceae</taxon>
        <taxon>Vibrio</taxon>
    </lineage>
</organism>
<sequence length="1028" mass="113058">MFKENAKKVETIIKTSEEPQSSRLNGFQRLKECCFIVGVLSSVLLAVALFTFSPADPSWSQTAWGGEIDNAGGLFGAWLADTLFFTFGSLAYPIPFLLAAAAWVICRKRGEDEPIDFMLWGTRLLGLTVLIMTSCGLADINFDDIWYFSSGGVVGDVLSSLALPTLNVLGTTLVLLFLWGAGFTLFTGISWLNIVEWLGDRSLAVLAAIANKFRGSEQETLEPQLDEFVEDKVSTKHVEDDQQDDETLPHLTAYEVEEPKEKAAVHEYPIYMPQAKSETSAVKPTPEPQPQRVAAVNATPTYVEPEPQLKAVSTDNVDPMVERTKQLNVTIEELEAAAQQADDWASEEQTSQSYADTNAVYQEQVQAKHEEVVEHDTPQLESSYAEYAQFAAQQEQQLHVEPTPHEEPVIDTRALDDITDHAEPSEHIEPTISDFDVVDEEETYVAPQPQSRSPEPQPMVQPQSVSQIQPEQAPEPSVAFEPAPQEVEVEEVQDGDQDVAAFQSMVSSAQAKVAATQNPFLMKQEQNLPVPEEPLPTLELLYHPEKRENFIDREALEQVARLVESKLADYKIKADVVGIYPGPVITRFELDLAPGVKVSRISGLSMDLARALSAMAVRVVEVIPGKPYVGLELPNMSRQTVYLSDVISSPQFEQAKSPTTVVLGQDIAGEAVIADIAKMPHVLVAGTTGSGKSVGVNVMILSMLYKASPEDLRFIMIDPKMLELSIYEGIPHLLAEVVTDMKDASNALRWCVGEMERRYKLMSALGVRNVKGFNEKLKMAAEAGHPIHDPFWQEGDSMDTEPPLLEKLPYIVVVVDEFADLMMVVGKKVEELIARLAQKARAAGIHLILATQRPSVDVITGLIKANIPTRVAFTVSTKTDSRTILDQGGAESLLGMGDMLYLPPGSSHTIRVHGAFASDDDVHAVVNNWKARGKPNYIDEIISGDQGPESLLPGEQMESDEEMDPLFDQVVEHVVQSRRGSVSGVQRRFKIGYNRAARIVEQLEAQGIVSAPGHNGNREVLAPAPPKD</sequence>
<evidence type="ECO:0000250" key="1"/>
<evidence type="ECO:0000255" key="2"/>
<evidence type="ECO:0000255" key="3">
    <source>
        <dbReference type="PROSITE-ProRule" id="PRU00289"/>
    </source>
</evidence>
<evidence type="ECO:0000256" key="4">
    <source>
        <dbReference type="SAM" id="MobiDB-lite"/>
    </source>
</evidence>
<evidence type="ECO:0000305" key="5"/>
<feature type="chain" id="PRO_0000098317" description="DNA translocase FtsK">
    <location>
        <begin position="1"/>
        <end position="1028"/>
    </location>
</feature>
<feature type="transmembrane region" description="Helical" evidence="2">
    <location>
        <begin position="35"/>
        <end position="55"/>
    </location>
</feature>
<feature type="transmembrane region" description="Helical" evidence="2">
    <location>
        <begin position="85"/>
        <end position="105"/>
    </location>
</feature>
<feature type="transmembrane region" description="Helical" evidence="2">
    <location>
        <begin position="117"/>
        <end position="137"/>
    </location>
</feature>
<feature type="transmembrane region" description="Helical" evidence="2">
    <location>
        <begin position="145"/>
        <end position="165"/>
    </location>
</feature>
<feature type="transmembrane region" description="Helical" evidence="2">
    <location>
        <begin position="172"/>
        <end position="192"/>
    </location>
</feature>
<feature type="topological domain" description="Cytoplasmic" evidence="2">
    <location>
        <begin position="193"/>
        <end position="1028"/>
    </location>
</feature>
<feature type="domain" description="FtsK" evidence="3">
    <location>
        <begin position="669"/>
        <end position="882"/>
    </location>
</feature>
<feature type="region of interest" description="Disordered" evidence="4">
    <location>
        <begin position="422"/>
        <end position="479"/>
    </location>
</feature>
<feature type="compositionally biased region" description="Low complexity" evidence="4">
    <location>
        <begin position="447"/>
        <end position="472"/>
    </location>
</feature>
<feature type="binding site" evidence="3">
    <location>
        <begin position="689"/>
        <end position="694"/>
    </location>
    <ligand>
        <name>ATP</name>
        <dbReference type="ChEBI" id="CHEBI:30616"/>
    </ligand>
</feature>
<gene>
    <name type="primary">ftsK</name>
    <name type="ordered locus">VP1105</name>
</gene>
<dbReference type="EMBL" id="BA000031">
    <property type="protein sequence ID" value="BAC59368.1"/>
    <property type="molecule type" value="Genomic_DNA"/>
</dbReference>
<dbReference type="RefSeq" id="NP_797484.1">
    <property type="nucleotide sequence ID" value="NC_004603.1"/>
</dbReference>
<dbReference type="RefSeq" id="WP_005489025.1">
    <property type="nucleotide sequence ID" value="NC_004603.1"/>
</dbReference>
<dbReference type="SMR" id="Q87QP4"/>
<dbReference type="GeneID" id="1188610"/>
<dbReference type="KEGG" id="vpa:VP1105"/>
<dbReference type="PATRIC" id="fig|223926.6.peg.1047"/>
<dbReference type="eggNOG" id="COG1674">
    <property type="taxonomic scope" value="Bacteria"/>
</dbReference>
<dbReference type="HOGENOM" id="CLU_001981_0_2_6"/>
<dbReference type="Proteomes" id="UP000002493">
    <property type="component" value="Chromosome 1"/>
</dbReference>
<dbReference type="GO" id="GO:0005886">
    <property type="term" value="C:plasma membrane"/>
    <property type="evidence" value="ECO:0007669"/>
    <property type="project" value="UniProtKB-SubCell"/>
</dbReference>
<dbReference type="GO" id="GO:0005524">
    <property type="term" value="F:ATP binding"/>
    <property type="evidence" value="ECO:0007669"/>
    <property type="project" value="UniProtKB-KW"/>
</dbReference>
<dbReference type="GO" id="GO:0003677">
    <property type="term" value="F:DNA binding"/>
    <property type="evidence" value="ECO:0007669"/>
    <property type="project" value="UniProtKB-KW"/>
</dbReference>
<dbReference type="GO" id="GO:0051301">
    <property type="term" value="P:cell division"/>
    <property type="evidence" value="ECO:0007669"/>
    <property type="project" value="UniProtKB-KW"/>
</dbReference>
<dbReference type="GO" id="GO:0007059">
    <property type="term" value="P:chromosome segregation"/>
    <property type="evidence" value="ECO:0007669"/>
    <property type="project" value="UniProtKB-KW"/>
</dbReference>
<dbReference type="CDD" id="cd01127">
    <property type="entry name" value="TrwB_TraG_TraD_VirD4"/>
    <property type="match status" value="1"/>
</dbReference>
<dbReference type="FunFam" id="3.40.50.300:FF:000209">
    <property type="entry name" value="Cell division protein FtsK"/>
    <property type="match status" value="1"/>
</dbReference>
<dbReference type="FunFam" id="3.30.980.40:FF:000001">
    <property type="entry name" value="DNA translocase FtsK"/>
    <property type="match status" value="1"/>
</dbReference>
<dbReference type="Gene3D" id="3.30.980.40">
    <property type="match status" value="1"/>
</dbReference>
<dbReference type="Gene3D" id="3.40.50.300">
    <property type="entry name" value="P-loop containing nucleotide triphosphate hydrolases"/>
    <property type="match status" value="1"/>
</dbReference>
<dbReference type="Gene3D" id="1.10.10.10">
    <property type="entry name" value="Winged helix-like DNA-binding domain superfamily/Winged helix DNA-binding domain"/>
    <property type="match status" value="1"/>
</dbReference>
<dbReference type="InterPro" id="IPR050206">
    <property type="entry name" value="FtsK/SpoIIIE/SftA"/>
</dbReference>
<dbReference type="InterPro" id="IPR025199">
    <property type="entry name" value="FtsK_4TM"/>
</dbReference>
<dbReference type="InterPro" id="IPR041027">
    <property type="entry name" value="FtsK_alpha"/>
</dbReference>
<dbReference type="InterPro" id="IPR002543">
    <property type="entry name" value="FtsK_dom"/>
</dbReference>
<dbReference type="InterPro" id="IPR018541">
    <property type="entry name" value="Ftsk_gamma"/>
</dbReference>
<dbReference type="InterPro" id="IPR027417">
    <property type="entry name" value="P-loop_NTPase"/>
</dbReference>
<dbReference type="InterPro" id="IPR036388">
    <property type="entry name" value="WH-like_DNA-bd_sf"/>
</dbReference>
<dbReference type="InterPro" id="IPR036390">
    <property type="entry name" value="WH_DNA-bd_sf"/>
</dbReference>
<dbReference type="PANTHER" id="PTHR22683:SF41">
    <property type="entry name" value="DNA TRANSLOCASE FTSK"/>
    <property type="match status" value="1"/>
</dbReference>
<dbReference type="PANTHER" id="PTHR22683">
    <property type="entry name" value="SPORULATION PROTEIN RELATED"/>
    <property type="match status" value="1"/>
</dbReference>
<dbReference type="Pfam" id="PF13491">
    <property type="entry name" value="FtsK_4TM"/>
    <property type="match status" value="1"/>
</dbReference>
<dbReference type="Pfam" id="PF17854">
    <property type="entry name" value="FtsK_alpha"/>
    <property type="match status" value="1"/>
</dbReference>
<dbReference type="Pfam" id="PF09397">
    <property type="entry name" value="FtsK_gamma"/>
    <property type="match status" value="1"/>
</dbReference>
<dbReference type="Pfam" id="PF01580">
    <property type="entry name" value="FtsK_SpoIIIE"/>
    <property type="match status" value="1"/>
</dbReference>
<dbReference type="SMART" id="SM00843">
    <property type="entry name" value="Ftsk_gamma"/>
    <property type="match status" value="1"/>
</dbReference>
<dbReference type="SUPFAM" id="SSF52540">
    <property type="entry name" value="P-loop containing nucleoside triphosphate hydrolases"/>
    <property type="match status" value="1"/>
</dbReference>
<dbReference type="SUPFAM" id="SSF46785">
    <property type="entry name" value="Winged helix' DNA-binding domain"/>
    <property type="match status" value="1"/>
</dbReference>
<dbReference type="PROSITE" id="PS50901">
    <property type="entry name" value="FTSK"/>
    <property type="match status" value="1"/>
</dbReference>
<comment type="function">
    <text evidence="1">Essential cell division protein that coordinates cell division and chromosome segregation. The N-terminus is involved in assembly of the cell-division machinery. The C-terminus functions as a DNA motor that moves dsDNA in an ATP-dependent manner towards the dif recombination site, which is located within the replication terminus region. Translocation stops specifically at Xer-dif sites, where FtsK interacts with the Xer recombinase, allowing activation of chromosome unlinking by recombination. FtsK orienting polar sequences (KOPS) guide the direction of DNA translocation. FtsK can remove proteins from DNA as it translocates, but translocation stops specifically at XerCD-dif site, thereby preventing removal of XerC and XerD from dif (By similarity).</text>
</comment>
<comment type="subunit">
    <text evidence="1">Homohexamer. Forms a ring that surrounds DNA (By similarity).</text>
</comment>
<comment type="subcellular location">
    <subcellularLocation>
        <location evidence="1">Cell inner membrane</location>
        <topology evidence="1">Multi-pass membrane protein</topology>
    </subcellularLocation>
    <text evidence="1">Located at the septum.</text>
</comment>
<comment type="domain">
    <text evidence="1">Consists of an N-terminal domain, which is sufficient for the localization to the septal ring and is required for cell division, followed by a linker domain, and a C-terminal domain, which forms the translocation motor involved in chromosome segregation. The C-terminal domain can be further subdivided into alpha, beta and gamma subdomains. The alpha and beta subdomains multimerise to produce a hexameric ring, contain the nucleotide binding motif and form the DNA pump. The gamma subdomain is a regulatory subdomain that controls translocation of DNA by recognition of KOPS motifs and interacts with XerD recombinase (By similarity).</text>
</comment>
<comment type="similarity">
    <text evidence="5">Belongs to the FtsK/SpoIIIE/SftA family.</text>
</comment>
<name>FTSK_VIBPA</name>
<reference key="1">
    <citation type="journal article" date="2003" name="Lancet">
        <title>Genome sequence of Vibrio parahaemolyticus: a pathogenic mechanism distinct from that of V. cholerae.</title>
        <authorList>
            <person name="Makino K."/>
            <person name="Oshima K."/>
            <person name="Kurokawa K."/>
            <person name="Yokoyama K."/>
            <person name="Uda T."/>
            <person name="Tagomori K."/>
            <person name="Iijima Y."/>
            <person name="Najima M."/>
            <person name="Nakano M."/>
            <person name="Yamashita A."/>
            <person name="Kubota Y."/>
            <person name="Kimura S."/>
            <person name="Yasunaga T."/>
            <person name="Honda T."/>
            <person name="Shinagawa H."/>
            <person name="Hattori M."/>
            <person name="Iida T."/>
        </authorList>
    </citation>
    <scope>NUCLEOTIDE SEQUENCE [LARGE SCALE GENOMIC DNA]</scope>
    <source>
        <strain>RIMD 2210633</strain>
    </source>
</reference>
<protein>
    <recommendedName>
        <fullName>DNA translocase FtsK</fullName>
    </recommendedName>
</protein>